<comment type="function">
    <text evidence="1">Involved in cytoplasmic peptide degradation.</text>
</comment>
<comment type="catalytic activity">
    <reaction>
        <text>Preferential cleavage of bonds with hydrophobic residues at P1, P2 and P3' and a small residue at P1' in substrates of 5 to 15 residues.</text>
        <dbReference type="EC" id="3.4.24.15"/>
    </reaction>
</comment>
<comment type="cofactor">
    <cofactor evidence="1">
        <name>Zn(2+)</name>
        <dbReference type="ChEBI" id="CHEBI:29105"/>
    </cofactor>
    <text evidence="1">Binds 1 zinc ion.</text>
</comment>
<comment type="subcellular location">
    <subcellularLocation>
        <location evidence="1">Cytoplasm</location>
    </subcellularLocation>
</comment>
<comment type="similarity">
    <text evidence="2">Belongs to the peptidase M3 family.</text>
</comment>
<comment type="sequence caution" evidence="2">
    <conflict type="erroneous gene model prediction">
        <sequence resource="EMBL-CDS" id="AAG28905"/>
    </conflict>
</comment>
<dbReference type="EC" id="3.4.24.15"/>
<dbReference type="EMBL" id="AC008113">
    <property type="protein sequence ID" value="AAG28905.1"/>
    <property type="status" value="ALT_SEQ"/>
    <property type="molecule type" value="Genomic_DNA"/>
</dbReference>
<dbReference type="EMBL" id="CP002684">
    <property type="protein sequence ID" value="AEE34682.1"/>
    <property type="molecule type" value="Genomic_DNA"/>
</dbReference>
<dbReference type="RefSeq" id="NP_564902.4">
    <property type="nucleotide sequence ID" value="NM_105437.5"/>
</dbReference>
<dbReference type="SMR" id="F4HTQ1"/>
<dbReference type="FunCoup" id="F4HTQ1">
    <property type="interactions" value="3287"/>
</dbReference>
<dbReference type="STRING" id="3702.F4HTQ1"/>
<dbReference type="MEROPS" id="M03.A03"/>
<dbReference type="iPTMnet" id="F4HTQ1"/>
<dbReference type="PaxDb" id="3702-AT1G67690.1"/>
<dbReference type="ProteomicsDB" id="239073"/>
<dbReference type="EnsemblPlants" id="AT1G67690.1">
    <property type="protein sequence ID" value="AT1G67690.1"/>
    <property type="gene ID" value="AT1G67690"/>
</dbReference>
<dbReference type="GeneID" id="843094"/>
<dbReference type="Gramene" id="AT1G67690.1">
    <property type="protein sequence ID" value="AT1G67690.1"/>
    <property type="gene ID" value="AT1G67690"/>
</dbReference>
<dbReference type="KEGG" id="ath:AT1G67690"/>
<dbReference type="Araport" id="AT1G67690"/>
<dbReference type="TAIR" id="AT1G67690">
    <property type="gene designation" value="PSPM3"/>
</dbReference>
<dbReference type="eggNOG" id="KOG2089">
    <property type="taxonomic scope" value="Eukaryota"/>
</dbReference>
<dbReference type="HOGENOM" id="CLU_001805_2_1_1"/>
<dbReference type="InParanoid" id="F4HTQ1"/>
<dbReference type="OMA" id="MYTREGK"/>
<dbReference type="PRO" id="PR:F4HTQ1"/>
<dbReference type="Proteomes" id="UP000006548">
    <property type="component" value="Chromosome 1"/>
</dbReference>
<dbReference type="ExpressionAtlas" id="F4HTQ1">
    <property type="expression patterns" value="baseline and differential"/>
</dbReference>
<dbReference type="GO" id="GO:0005737">
    <property type="term" value="C:cytoplasm"/>
    <property type="evidence" value="ECO:0007669"/>
    <property type="project" value="UniProtKB-SubCell"/>
</dbReference>
<dbReference type="GO" id="GO:0046872">
    <property type="term" value="F:metal ion binding"/>
    <property type="evidence" value="ECO:0007669"/>
    <property type="project" value="UniProtKB-KW"/>
</dbReference>
<dbReference type="GO" id="GO:0004222">
    <property type="term" value="F:metalloendopeptidase activity"/>
    <property type="evidence" value="ECO:0007669"/>
    <property type="project" value="InterPro"/>
</dbReference>
<dbReference type="GO" id="GO:0006508">
    <property type="term" value="P:proteolysis"/>
    <property type="evidence" value="ECO:0007669"/>
    <property type="project" value="UniProtKB-KW"/>
</dbReference>
<dbReference type="CDD" id="cd06455">
    <property type="entry name" value="M3A_TOP"/>
    <property type="match status" value="1"/>
</dbReference>
<dbReference type="FunFam" id="3.40.390.10:FF:000032">
    <property type="entry name" value="Probable thimet oligopeptidase"/>
    <property type="match status" value="1"/>
</dbReference>
<dbReference type="FunFam" id="1.20.1050.40:FF:000001">
    <property type="entry name" value="Thimet oligopeptidase 1"/>
    <property type="match status" value="1"/>
</dbReference>
<dbReference type="Gene3D" id="3.40.390.10">
    <property type="entry name" value="Collagenase (Catalytic Domain)"/>
    <property type="match status" value="1"/>
</dbReference>
<dbReference type="Gene3D" id="1.20.1050.40">
    <property type="entry name" value="Endopeptidase. Chain P, domain 1"/>
    <property type="match status" value="1"/>
</dbReference>
<dbReference type="Gene3D" id="1.10.1370.10">
    <property type="entry name" value="Neurolysin, domain 3"/>
    <property type="match status" value="1"/>
</dbReference>
<dbReference type="InterPro" id="IPR024079">
    <property type="entry name" value="MetalloPept_cat_dom_sf"/>
</dbReference>
<dbReference type="InterPro" id="IPR024077">
    <property type="entry name" value="Neurolysin/TOP_dom2"/>
</dbReference>
<dbReference type="InterPro" id="IPR024080">
    <property type="entry name" value="Neurolysin/TOP_N"/>
</dbReference>
<dbReference type="InterPro" id="IPR045090">
    <property type="entry name" value="Pept_M3A_M3B"/>
</dbReference>
<dbReference type="InterPro" id="IPR001567">
    <property type="entry name" value="Pept_M3A_M3B_dom"/>
</dbReference>
<dbReference type="PANTHER" id="PTHR11804">
    <property type="entry name" value="PROTEASE M3 THIMET OLIGOPEPTIDASE-RELATED"/>
    <property type="match status" value="1"/>
</dbReference>
<dbReference type="PANTHER" id="PTHR11804:SF82">
    <property type="entry name" value="THIMET OLIGOPEPTIDASE-RELATED"/>
    <property type="match status" value="1"/>
</dbReference>
<dbReference type="Pfam" id="PF01432">
    <property type="entry name" value="Peptidase_M3"/>
    <property type="match status" value="1"/>
</dbReference>
<dbReference type="SUPFAM" id="SSF55486">
    <property type="entry name" value="Metalloproteases ('zincins'), catalytic domain"/>
    <property type="match status" value="1"/>
</dbReference>
<dbReference type="PROSITE" id="PS00142">
    <property type="entry name" value="ZINC_PROTEASE"/>
    <property type="match status" value="1"/>
</dbReference>
<reference key="1">
    <citation type="journal article" date="2000" name="Nature">
        <title>Sequence and analysis of chromosome 1 of the plant Arabidopsis thaliana.</title>
        <authorList>
            <person name="Theologis A."/>
            <person name="Ecker J.R."/>
            <person name="Palm C.J."/>
            <person name="Federspiel N.A."/>
            <person name="Kaul S."/>
            <person name="White O."/>
            <person name="Alonso J."/>
            <person name="Altafi H."/>
            <person name="Araujo R."/>
            <person name="Bowman C.L."/>
            <person name="Brooks S.Y."/>
            <person name="Buehler E."/>
            <person name="Chan A."/>
            <person name="Chao Q."/>
            <person name="Chen H."/>
            <person name="Cheuk R.F."/>
            <person name="Chin C.W."/>
            <person name="Chung M.K."/>
            <person name="Conn L."/>
            <person name="Conway A.B."/>
            <person name="Conway A.R."/>
            <person name="Creasy T.H."/>
            <person name="Dewar K."/>
            <person name="Dunn P."/>
            <person name="Etgu P."/>
            <person name="Feldblyum T.V."/>
            <person name="Feng J.-D."/>
            <person name="Fong B."/>
            <person name="Fujii C.Y."/>
            <person name="Gill J.E."/>
            <person name="Goldsmith A.D."/>
            <person name="Haas B."/>
            <person name="Hansen N.F."/>
            <person name="Hughes B."/>
            <person name="Huizar L."/>
            <person name="Hunter J.L."/>
            <person name="Jenkins J."/>
            <person name="Johnson-Hopson C."/>
            <person name="Khan S."/>
            <person name="Khaykin E."/>
            <person name="Kim C.J."/>
            <person name="Koo H.L."/>
            <person name="Kremenetskaia I."/>
            <person name="Kurtz D.B."/>
            <person name="Kwan A."/>
            <person name="Lam B."/>
            <person name="Langin-Hooper S."/>
            <person name="Lee A."/>
            <person name="Lee J.M."/>
            <person name="Lenz C.A."/>
            <person name="Li J.H."/>
            <person name="Li Y.-P."/>
            <person name="Lin X."/>
            <person name="Liu S.X."/>
            <person name="Liu Z.A."/>
            <person name="Luros J.S."/>
            <person name="Maiti R."/>
            <person name="Marziali A."/>
            <person name="Militscher J."/>
            <person name="Miranda M."/>
            <person name="Nguyen M."/>
            <person name="Nierman W.C."/>
            <person name="Osborne B.I."/>
            <person name="Pai G."/>
            <person name="Peterson J."/>
            <person name="Pham P.K."/>
            <person name="Rizzo M."/>
            <person name="Rooney T."/>
            <person name="Rowley D."/>
            <person name="Sakano H."/>
            <person name="Salzberg S.L."/>
            <person name="Schwartz J.R."/>
            <person name="Shinn P."/>
            <person name="Southwick A.M."/>
            <person name="Sun H."/>
            <person name="Tallon L.J."/>
            <person name="Tambunga G."/>
            <person name="Toriumi M.J."/>
            <person name="Town C.D."/>
            <person name="Utterback T."/>
            <person name="Van Aken S."/>
            <person name="Vaysberg M."/>
            <person name="Vysotskaia V.S."/>
            <person name="Walker M."/>
            <person name="Wu D."/>
            <person name="Yu G."/>
            <person name="Fraser C.M."/>
            <person name="Venter J.C."/>
            <person name="Davis R.W."/>
        </authorList>
    </citation>
    <scope>NUCLEOTIDE SEQUENCE [LARGE SCALE GENOMIC DNA]</scope>
    <source>
        <strain>cv. Columbia</strain>
    </source>
</reference>
<reference key="2">
    <citation type="journal article" date="2017" name="Plant J.">
        <title>Araport11: a complete reannotation of the Arabidopsis thaliana reference genome.</title>
        <authorList>
            <person name="Cheng C.Y."/>
            <person name="Krishnakumar V."/>
            <person name="Chan A.P."/>
            <person name="Thibaud-Nissen F."/>
            <person name="Schobel S."/>
            <person name="Town C.D."/>
        </authorList>
    </citation>
    <scope>GENOME REANNOTATION</scope>
    <source>
        <strain>cv. Columbia</strain>
    </source>
</reference>
<gene>
    <name type="ordered locus">At1g67690</name>
    <name type="ORF">F12A21.16</name>
</gene>
<accession>F4HTQ1</accession>
<accession>Q9FXD5</accession>
<proteinExistence type="inferred from homology"/>
<name>MPRO1_ARATH</name>
<sequence>MTENEGNDKKIEGSNPKKKLNVVTFTGAAGLLGLAVSFAIFTFKSHKQKSKKKGLPGCDTVCVNLSAKEILDLAEEIIHKSTRVHDAVALVSLDKLSYENVVLPLAELEARQLSLIQCCVFPKMLSPHDNVRKASTEAEQKIDAHILSCRKREDVYRIIKIYAAKGESISPEAKCYLQCLVRDFEDNGLNLTAIKREEVERLKYEIDELSLRYIQNLNEDSSCLFFTEDELAGLPLEFLQNLEKTQNKEFKLTLESRHVAAILELCKIAKTRKTVAMAYGKRCGDTNIPVLQRLVQSRHRLACVCGYAHFADYALDRRMSKTSMRVIRFLEDISSSLTDLAIREFSILEDLKRKEEGEIPFGVEDLLYYIKRVEELQFDLDFGDIRQYFPVNLVLSGIFKICQDLFGIKFEEVTEVDVWYHDIRAFAVFDSGSGKLLGYFYLDMFTREGKCNHSCVVALQNNALFSNGACQIPVALLIAQFAKDGSGEAVPLGFSDVVNLFHEFGHVVQHICNRASFARFSGLRVDPDFREIPSQLLENWCYESFTLKLISGYRQDITKPLVDEVCKTLKRWRYSFSALKSLQEILYCLFDQIIYSDDDADLLQLIRSLHPKVMIGLPVVEGTNPASCFPRAVIGSEATCYSRLWSEVYAADIFASKFGDGHPNLYAGLQFRDKVLAPGGGKEPMELLTNFLGREPSTQAFIASRTNYSL</sequence>
<organism>
    <name type="scientific">Arabidopsis thaliana</name>
    <name type="common">Mouse-ear cress</name>
    <dbReference type="NCBI Taxonomy" id="3702"/>
    <lineage>
        <taxon>Eukaryota</taxon>
        <taxon>Viridiplantae</taxon>
        <taxon>Streptophyta</taxon>
        <taxon>Embryophyta</taxon>
        <taxon>Tracheophyta</taxon>
        <taxon>Spermatophyta</taxon>
        <taxon>Magnoliopsida</taxon>
        <taxon>eudicotyledons</taxon>
        <taxon>Gunneridae</taxon>
        <taxon>Pentapetalae</taxon>
        <taxon>rosids</taxon>
        <taxon>malvids</taxon>
        <taxon>Brassicales</taxon>
        <taxon>Brassicaceae</taxon>
        <taxon>Camelineae</taxon>
        <taxon>Arabidopsis</taxon>
    </lineage>
</organism>
<feature type="chain" id="PRO_0000425140" description="Probable thimet oligopeptidase">
    <location>
        <begin position="1"/>
        <end position="710"/>
    </location>
</feature>
<feature type="active site" evidence="1">
    <location>
        <position position="503"/>
    </location>
</feature>
<feature type="binding site" evidence="1">
    <location>
        <position position="502"/>
    </location>
    <ligand>
        <name>Zn(2+)</name>
        <dbReference type="ChEBI" id="CHEBI:29105"/>
        <note>catalytic</note>
    </ligand>
</feature>
<feature type="binding site" evidence="1">
    <location>
        <position position="506"/>
    </location>
    <ligand>
        <name>Zn(2+)</name>
        <dbReference type="ChEBI" id="CHEBI:29105"/>
        <note>catalytic</note>
    </ligand>
</feature>
<keyword id="KW-0963">Cytoplasm</keyword>
<keyword id="KW-0378">Hydrolase</keyword>
<keyword id="KW-0479">Metal-binding</keyword>
<keyword id="KW-0482">Metalloprotease</keyword>
<keyword id="KW-0645">Protease</keyword>
<keyword id="KW-1185">Reference proteome</keyword>
<keyword id="KW-0862">Zinc</keyword>
<protein>
    <recommendedName>
        <fullName>Probable thimet oligopeptidase</fullName>
        <ecNumber>3.4.24.15</ecNumber>
    </recommendedName>
    <alternativeName>
        <fullName>Zincin-like metalloproteases-like protein 1</fullName>
    </alternativeName>
</protein>
<evidence type="ECO:0000250" key="1"/>
<evidence type="ECO:0000305" key="2"/>